<organism>
    <name type="scientific">Thermoplasma acidophilum (strain ATCC 25905 / DSM 1728 / JCM 9062 / NBRC 15155 / AMRC-C165)</name>
    <dbReference type="NCBI Taxonomy" id="273075"/>
    <lineage>
        <taxon>Archaea</taxon>
        <taxon>Methanobacteriati</taxon>
        <taxon>Thermoplasmatota</taxon>
        <taxon>Thermoplasmata</taxon>
        <taxon>Thermoplasmatales</taxon>
        <taxon>Thermoplasmataceae</taxon>
        <taxon>Thermoplasma</taxon>
    </lineage>
</organism>
<name>CDC62_THEAC</name>
<accession>Q9HKG3</accession>
<evidence type="ECO:0000255" key="1">
    <source>
        <dbReference type="HAMAP-Rule" id="MF_01407"/>
    </source>
</evidence>
<evidence type="ECO:0000269" key="2">
    <source>
    </source>
</evidence>
<evidence type="ECO:0000269" key="3">
    <source>
    </source>
</evidence>
<proteinExistence type="evidence at protein level"/>
<keyword id="KW-0067">ATP-binding</keyword>
<keyword id="KW-0235">DNA replication</keyword>
<keyword id="KW-0547">Nucleotide-binding</keyword>
<keyword id="KW-1185">Reference proteome</keyword>
<comment type="function">
    <text evidence="1 2 3">Involved in regulation of DNA replication. Stimulates the helicase activity of MCM via stimulation of its ATPase activity. Binding to MCM may result in conformational changes in MCM, leading to catalytic ATP hydrolysis by the helicase. Directly stimulates MCM movement along single-stranded and double-stranded DNA. Does not bind DNA.</text>
</comment>
<comment type="subunit">
    <text evidence="2 3">Interacts with MCM.</text>
</comment>
<comment type="domain">
    <text evidence="3">The N-terminal AAA+ ATPase domain and the C-terminal winged-helix (WH) domain are both required for stimulation of MCM activity.</text>
</comment>
<comment type="similarity">
    <text evidence="1">Belongs to the CDC6/cdc18 family.</text>
</comment>
<reference key="1">
    <citation type="journal article" date="2000" name="Nature">
        <title>The genome sequence of the thermoacidophilic scavenger Thermoplasma acidophilum.</title>
        <authorList>
            <person name="Ruepp A."/>
            <person name="Graml W."/>
            <person name="Santos-Martinez M.-L."/>
            <person name="Koretke K.K."/>
            <person name="Volker C."/>
            <person name="Mewes H.-W."/>
            <person name="Frishman D."/>
            <person name="Stocker S."/>
            <person name="Lupas A.N."/>
            <person name="Baumeister W."/>
        </authorList>
    </citation>
    <scope>NUCLEOTIDE SEQUENCE [LARGE SCALE GENOMIC DNA]</scope>
    <source>
        <strain>ATCC 25905 / DSM 1728 / JCM 9062 / NBRC 15155 / AMRC-C165</strain>
    </source>
</reference>
<reference key="2">
    <citation type="journal article" date="2006" name="Nucleic Acids Res.">
        <title>Stimulation of MCM helicase activity by a Cdc6 protein in the archaeon Thermoplasma acidophilum.</title>
        <authorList>
            <person name="Haugland G.T."/>
            <person name="Shin J.H."/>
            <person name="Birkeland N.K."/>
            <person name="Kelman Z."/>
        </authorList>
    </citation>
    <scope>FUNCTION</scope>
    <scope>INTERACTION WITH MCM</scope>
    <scope>GENE NAME</scope>
</reference>
<reference key="3">
    <citation type="journal article" date="2008" name="Nucleic Acids Res.">
        <title>Thermoplasma acidophilum Cdc6 protein stimulates MCM helicase activity by regulating its ATPase activity.</title>
        <authorList>
            <person name="Haugland G.T."/>
            <person name="Sakakibara N."/>
            <person name="Pey A.L."/>
            <person name="Rollor C.R."/>
            <person name="Birkeland N.K."/>
            <person name="Kelman Z."/>
        </authorList>
    </citation>
    <scope>FUNCTION</scope>
    <scope>INTERACTION WITH MCM</scope>
    <scope>DOMAIN</scope>
    <scope>MUTAGENESIS OF LYS-66 AND ASP-143</scope>
</reference>
<gene>
    <name type="primary">cdc6-2</name>
    <name type="ordered locus">Ta0636</name>
</gene>
<sequence>MDNPFARFAGTRTIQANLSLLEENYVPDSFPHRENQINEMVTILSSIMRGSRPSNIIVYGKTGTGKTSTTKYVTKMLVEAASNVSVVYVNCEIYDSPYSILVAIANSAGEEKIPELGWPIDRIYRETVERVEKTGKFFIIILDEMDRLIKKNGGDSLYVLLKLMTDVDSVRVSMIGITNDTTVLENIDARIKSRLNQESIVFPPYNASEIRDIISSRLDKVLGPGVVDDTAINLCAAIGAQEHGDARKAIDLMRIAIEIAIRENRNKITENEIYEARERYEMNVLREAISTLPLHSKIVLLSAVVTQEIEPNSVITGEIYENYRRICDDLGFSPLSPRRISDLLTELADYGLLVMDDRNMGKYGRTRSFSVVHQAETIKKYLLEDENLSMFKSSKMPKQTRFDT</sequence>
<dbReference type="EMBL" id="AL445064">
    <property type="protein sequence ID" value="CAC11775.1"/>
    <property type="molecule type" value="Genomic_DNA"/>
</dbReference>
<dbReference type="RefSeq" id="WP_010901059.1">
    <property type="nucleotide sequence ID" value="NC_002578.1"/>
</dbReference>
<dbReference type="SMR" id="Q9HKG3"/>
<dbReference type="FunCoup" id="Q9HKG3">
    <property type="interactions" value="63"/>
</dbReference>
<dbReference type="STRING" id="273075.gene:9571856"/>
<dbReference type="PaxDb" id="273075-Ta0636"/>
<dbReference type="EnsemblBacteria" id="CAC11775">
    <property type="protein sequence ID" value="CAC11775"/>
    <property type="gene ID" value="CAC11775"/>
</dbReference>
<dbReference type="KEGG" id="tac:Ta0636"/>
<dbReference type="eggNOG" id="arCOG00467">
    <property type="taxonomic scope" value="Archaea"/>
</dbReference>
<dbReference type="HOGENOM" id="CLU_025112_3_1_2"/>
<dbReference type="InParanoid" id="Q9HKG3"/>
<dbReference type="OrthoDB" id="195574at2157"/>
<dbReference type="Proteomes" id="UP000001024">
    <property type="component" value="Chromosome"/>
</dbReference>
<dbReference type="GO" id="GO:0005524">
    <property type="term" value="F:ATP binding"/>
    <property type="evidence" value="ECO:0007669"/>
    <property type="project" value="UniProtKB-UniRule"/>
</dbReference>
<dbReference type="GO" id="GO:0016887">
    <property type="term" value="F:ATP hydrolysis activity"/>
    <property type="evidence" value="ECO:0007669"/>
    <property type="project" value="InterPro"/>
</dbReference>
<dbReference type="GO" id="GO:0006260">
    <property type="term" value="P:DNA replication"/>
    <property type="evidence" value="ECO:0007669"/>
    <property type="project" value="UniProtKB-UniRule"/>
</dbReference>
<dbReference type="CDD" id="cd08768">
    <property type="entry name" value="Cdc6_C"/>
    <property type="match status" value="1"/>
</dbReference>
<dbReference type="FunFam" id="1.10.8.60:FF:000073">
    <property type="entry name" value="ORC1-type DNA replication protein"/>
    <property type="match status" value="1"/>
</dbReference>
<dbReference type="Gene3D" id="1.10.8.60">
    <property type="match status" value="1"/>
</dbReference>
<dbReference type="Gene3D" id="3.40.50.300">
    <property type="entry name" value="P-loop containing nucleotide triphosphate hydrolases"/>
    <property type="match status" value="1"/>
</dbReference>
<dbReference type="Gene3D" id="1.10.10.10">
    <property type="entry name" value="Winged helix-like DNA-binding domain superfamily/Winged helix DNA-binding domain"/>
    <property type="match status" value="1"/>
</dbReference>
<dbReference type="HAMAP" id="MF_01407">
    <property type="entry name" value="ORC1_type_DNA_replic_protein"/>
    <property type="match status" value="1"/>
</dbReference>
<dbReference type="InterPro" id="IPR003593">
    <property type="entry name" value="AAA+_ATPase"/>
</dbReference>
<dbReference type="InterPro" id="IPR049945">
    <property type="entry name" value="AAA_22"/>
</dbReference>
<dbReference type="InterPro" id="IPR015163">
    <property type="entry name" value="Cdc6_C"/>
</dbReference>
<dbReference type="InterPro" id="IPR055237">
    <property type="entry name" value="Cdc6_lid"/>
</dbReference>
<dbReference type="InterPro" id="IPR050311">
    <property type="entry name" value="ORC1/CDC6"/>
</dbReference>
<dbReference type="InterPro" id="IPR014277">
    <property type="entry name" value="Orc1/Cdc6_arc"/>
</dbReference>
<dbReference type="InterPro" id="IPR027417">
    <property type="entry name" value="P-loop_NTPase"/>
</dbReference>
<dbReference type="InterPro" id="IPR036388">
    <property type="entry name" value="WH-like_DNA-bd_sf"/>
</dbReference>
<dbReference type="InterPro" id="IPR036390">
    <property type="entry name" value="WH_DNA-bd_sf"/>
</dbReference>
<dbReference type="NCBIfam" id="TIGR02928">
    <property type="entry name" value="orc1/cdc6 family replication initiation protein"/>
    <property type="match status" value="1"/>
</dbReference>
<dbReference type="NCBIfam" id="NF001625">
    <property type="entry name" value="PRK00411.1-3"/>
    <property type="match status" value="1"/>
</dbReference>
<dbReference type="PANTHER" id="PTHR10763:SF26">
    <property type="entry name" value="CELL DIVISION CONTROL PROTEIN 6 HOMOLOG"/>
    <property type="match status" value="1"/>
</dbReference>
<dbReference type="PANTHER" id="PTHR10763">
    <property type="entry name" value="CELL DIVISION CONTROL PROTEIN 6-RELATED"/>
    <property type="match status" value="1"/>
</dbReference>
<dbReference type="Pfam" id="PF13401">
    <property type="entry name" value="AAA_22"/>
    <property type="match status" value="1"/>
</dbReference>
<dbReference type="Pfam" id="PF09079">
    <property type="entry name" value="Cdc6_C"/>
    <property type="match status" value="1"/>
</dbReference>
<dbReference type="Pfam" id="PF22703">
    <property type="entry name" value="Cdc6_lid"/>
    <property type="match status" value="1"/>
</dbReference>
<dbReference type="SMART" id="SM00382">
    <property type="entry name" value="AAA"/>
    <property type="match status" value="1"/>
</dbReference>
<dbReference type="SMART" id="SM01074">
    <property type="entry name" value="Cdc6_C"/>
    <property type="match status" value="1"/>
</dbReference>
<dbReference type="SUPFAM" id="SSF52540">
    <property type="entry name" value="P-loop containing nucleoside triphosphate hydrolases"/>
    <property type="match status" value="1"/>
</dbReference>
<dbReference type="SUPFAM" id="SSF46785">
    <property type="entry name" value="Winged helix' DNA-binding domain"/>
    <property type="match status" value="1"/>
</dbReference>
<feature type="chain" id="PRO_0000151024" description="ORC1-type DNA replication protein 2">
    <location>
        <begin position="1"/>
        <end position="404"/>
    </location>
</feature>
<feature type="binding site" evidence="1">
    <location>
        <begin position="64"/>
        <end position="68"/>
    </location>
    <ligand>
        <name>ATP</name>
        <dbReference type="ChEBI" id="CHEBI:30616"/>
    </ligand>
</feature>
<feature type="binding site" evidence="1">
    <location>
        <position position="205"/>
    </location>
    <ligand>
        <name>ATP</name>
        <dbReference type="ChEBI" id="CHEBI:30616"/>
    </ligand>
</feature>
<feature type="binding site" evidence="1">
    <location>
        <position position="217"/>
    </location>
    <ligand>
        <name>ATP</name>
        <dbReference type="ChEBI" id="CHEBI:30616"/>
    </ligand>
</feature>
<feature type="mutagenesis site" description="Does not affect stimulation of helicase activity." evidence="3">
    <original>K</original>
    <variation>E</variation>
    <location>
        <position position="66"/>
    </location>
</feature>
<feature type="mutagenesis site" description="Does not affect stimulation of helicase activity." evidence="3">
    <original>D</original>
    <variation>N</variation>
    <location>
        <position position="143"/>
    </location>
</feature>
<protein>
    <recommendedName>
        <fullName evidence="1">ORC1-type DNA replication protein 2</fullName>
    </recommendedName>
</protein>